<gene>
    <name type="primary">Haus5</name>
    <name type="synonym">Kiaa0841</name>
</gene>
<keyword id="KW-0007">Acetylation</keyword>
<keyword id="KW-0025">Alternative splicing</keyword>
<keyword id="KW-0131">Cell cycle</keyword>
<keyword id="KW-0132">Cell division</keyword>
<keyword id="KW-0175">Coiled coil</keyword>
<keyword id="KW-0963">Cytoplasm</keyword>
<keyword id="KW-0206">Cytoskeleton</keyword>
<keyword id="KW-0493">Microtubule</keyword>
<keyword id="KW-0498">Mitosis</keyword>
<keyword id="KW-1185">Reference proteome</keyword>
<feature type="chain" id="PRO_0000050777" description="HAUS augmin-like complex subunit 5">
    <location>
        <begin position="1"/>
        <end position="619"/>
    </location>
</feature>
<feature type="coiled-coil region" evidence="3">
    <location>
        <begin position="73"/>
        <end position="108"/>
    </location>
</feature>
<feature type="coiled-coil region" evidence="3">
    <location>
        <begin position="310"/>
        <end position="395"/>
    </location>
</feature>
<feature type="coiled-coil region" evidence="3">
    <location>
        <begin position="550"/>
        <end position="590"/>
    </location>
</feature>
<feature type="modified residue" description="N-acetylmethionine" evidence="2">
    <location>
        <position position="1"/>
    </location>
</feature>
<feature type="splice variant" id="VSP_013929" description="In isoform 2." evidence="4">
    <original>ASELLLPRAAS</original>
    <variation>TSWVSEEEISV</variation>
    <location>
        <begin position="507"/>
        <end position="517"/>
    </location>
</feature>
<feature type="splice variant" id="VSP_013930" description="In isoform 2." evidence="4">
    <location>
        <begin position="518"/>
        <end position="619"/>
    </location>
</feature>
<feature type="sequence conflict" description="In Ref. 4; BAC98038." evidence="5" ref="4">
    <original>NPK</original>
    <variation>SYQ</variation>
    <location>
        <begin position="71"/>
        <end position="73"/>
    </location>
</feature>
<feature type="sequence conflict" description="In Ref. 2; EDL24000, 3; AAI18935 and 4; BAC98038." evidence="5" ref="2 3 4">
    <original>H</original>
    <variation>R</variation>
    <location>
        <position position="156"/>
    </location>
</feature>
<feature type="sequence conflict" description="In Ref. 2; EDL24000 and 3; AAI18935." evidence="5" ref="2 3">
    <original>R</original>
    <variation>H</variation>
    <location>
        <position position="321"/>
    </location>
</feature>
<name>HAUS5_MOUSE</name>
<proteinExistence type="evidence at protein level"/>
<sequence>MELTQKERELSRWAAEEMEVPLAARPRESTLRRLCLSQGADIWAYIVQHVRSQRNIKKIQGNLLWHAYQDNPKIHRKLELEATVARLRAENQELDQSLELMDQESEAQDVAMTQTLQSLKDTQHRALLLQAQAGAVRRQQRGLQDPMQRLQNQLKHLQDMQRKAKVDVTFGPVVSAAPALEPEVLGDVRAACTLRTQFLQNLLTPRARGGSILSPCDDHVGTSYQQWLTSVETLLTNHPAGHVLAALEYLAAERESEIRSLCYGDGLKEEELSRPQAPESSNSSQVLPSTVHLIQEGWQAVGALVTQRSALLSERQVLTGRLQRLVEEVKRLLLGSSERKVLLLGLRHSGLLAELKALHAQSQELESAVGQRHLLLRELQAKRQRILQWRQLVEDRQEQIRLLIKGNSASKTRLSRGPEEVLALIDQKLVPTSEAVAPQSQELLRCLKEEAKHLPRVLLGPLLPYHVKGLKPLSRILPSIHQLHPTNPRASSLILLSHTLGLPVGKASELLLPRAASLQQDLLFLQDQLGLRRGNLCVKTSLPPGPSTQELLQMQVSQEKEQNENVGQTLKKLSNLLKQALEQIPELQGIVQDWWEQPSQAALPEEICQGLSLPQCQLR</sequence>
<accession>Q9D786</accession>
<accession>Q08EB3</accession>
<accession>Q0VF86</accession>
<accession>Q5HZI7</accession>
<accession>Q6ZQ35</accession>
<accession>Q8CIK2</accession>
<dbReference type="EMBL" id="AK009476">
    <property type="protein sequence ID" value="BAB26314.1"/>
    <property type="molecule type" value="mRNA"/>
</dbReference>
<dbReference type="EMBL" id="CH466593">
    <property type="protein sequence ID" value="EDL24000.1"/>
    <property type="molecule type" value="Genomic_DNA"/>
</dbReference>
<dbReference type="EMBL" id="BC023723">
    <property type="protein sequence ID" value="AAH23723.1"/>
    <property type="status" value="ALT_INIT"/>
    <property type="molecule type" value="mRNA"/>
</dbReference>
<dbReference type="EMBL" id="BC089002">
    <property type="protein sequence ID" value="AAH89002.1"/>
    <property type="status" value="ALT_INIT"/>
    <property type="molecule type" value="mRNA"/>
</dbReference>
<dbReference type="EMBL" id="BC118934">
    <property type="protein sequence ID" value="AAI18935.1"/>
    <property type="molecule type" value="mRNA"/>
</dbReference>
<dbReference type="EMBL" id="BC118935">
    <property type="protein sequence ID" value="AAI18936.1"/>
    <property type="molecule type" value="mRNA"/>
</dbReference>
<dbReference type="EMBL" id="AK129228">
    <property type="protein sequence ID" value="BAC98038.2"/>
    <property type="molecule type" value="Transcribed_RNA"/>
</dbReference>
<dbReference type="CCDS" id="CCDS52180.1">
    <molecule id="Q9D786-1"/>
</dbReference>
<dbReference type="RefSeq" id="NP_082275.1">
    <molecule id="Q9D786-1"/>
    <property type="nucleotide sequence ID" value="NM_027999.1"/>
</dbReference>
<dbReference type="SMR" id="Q9D786"/>
<dbReference type="BioGRID" id="215022">
    <property type="interactions" value="5"/>
</dbReference>
<dbReference type="FunCoup" id="Q9D786">
    <property type="interactions" value="1414"/>
</dbReference>
<dbReference type="STRING" id="10090.ENSMUSP00000019697"/>
<dbReference type="iPTMnet" id="Q9D786"/>
<dbReference type="PhosphoSitePlus" id="Q9D786"/>
<dbReference type="PaxDb" id="10090-ENSMUSP00000019697"/>
<dbReference type="PeptideAtlas" id="Q9D786"/>
<dbReference type="ProteomicsDB" id="270890">
    <molecule id="Q9D786-1"/>
</dbReference>
<dbReference type="ProteomicsDB" id="270891">
    <molecule id="Q9D786-2"/>
</dbReference>
<dbReference type="Pumba" id="Q9D786"/>
<dbReference type="Antibodypedia" id="54102">
    <property type="antibodies" value="88 antibodies from 17 providers"/>
</dbReference>
<dbReference type="Ensembl" id="ENSMUST00000019697.9">
    <molecule id="Q9D786-1"/>
    <property type="protein sequence ID" value="ENSMUSP00000019697.9"/>
    <property type="gene ID" value="ENSMUSG00000078762.11"/>
</dbReference>
<dbReference type="Ensembl" id="ENSMUST00000132862.8">
    <molecule id="Q9D786-2"/>
    <property type="protein sequence ID" value="ENSMUSP00000121739.2"/>
    <property type="gene ID" value="ENSMUSG00000078762.11"/>
</dbReference>
<dbReference type="GeneID" id="71909"/>
<dbReference type="KEGG" id="mmu:71909"/>
<dbReference type="UCSC" id="uc009gfs.2">
    <molecule id="Q9D786-1"/>
    <property type="organism name" value="mouse"/>
</dbReference>
<dbReference type="AGR" id="MGI:1919159"/>
<dbReference type="CTD" id="23354"/>
<dbReference type="MGI" id="MGI:1919159">
    <property type="gene designation" value="Haus5"/>
</dbReference>
<dbReference type="VEuPathDB" id="HostDB:ENSMUSG00000078762"/>
<dbReference type="eggNOG" id="ENOG502QVVA">
    <property type="taxonomic scope" value="Eukaryota"/>
</dbReference>
<dbReference type="GeneTree" id="ENSGT00390000012508"/>
<dbReference type="HOGENOM" id="CLU_433414_0_0_1"/>
<dbReference type="InParanoid" id="Q9D786"/>
<dbReference type="OMA" id="LRYYVNQ"/>
<dbReference type="OrthoDB" id="2019614at2759"/>
<dbReference type="PhylomeDB" id="Q9D786"/>
<dbReference type="TreeFam" id="TF333977"/>
<dbReference type="Reactome" id="R-MMU-2565942">
    <property type="pathway name" value="Regulation of PLK1 Activity at G2/M Transition"/>
</dbReference>
<dbReference type="Reactome" id="R-MMU-380259">
    <property type="pathway name" value="Loss of Nlp from mitotic centrosomes"/>
</dbReference>
<dbReference type="Reactome" id="R-MMU-380270">
    <property type="pathway name" value="Recruitment of mitotic centrosome proteins and complexes"/>
</dbReference>
<dbReference type="Reactome" id="R-MMU-380284">
    <property type="pathway name" value="Loss of proteins required for interphase microtubule organization from the centrosome"/>
</dbReference>
<dbReference type="Reactome" id="R-MMU-380320">
    <property type="pathway name" value="Recruitment of NuMA to mitotic centrosomes"/>
</dbReference>
<dbReference type="Reactome" id="R-MMU-5620912">
    <property type="pathway name" value="Anchoring of the basal body to the plasma membrane"/>
</dbReference>
<dbReference type="Reactome" id="R-MMU-8854518">
    <property type="pathway name" value="AURKA Activation by TPX2"/>
</dbReference>
<dbReference type="BioGRID-ORCS" id="71909">
    <property type="hits" value="25 hits in 77 CRISPR screens"/>
</dbReference>
<dbReference type="ChiTaRS" id="Haus5">
    <property type="organism name" value="mouse"/>
</dbReference>
<dbReference type="PRO" id="PR:Q9D786"/>
<dbReference type="Proteomes" id="UP000000589">
    <property type="component" value="Chromosome 7"/>
</dbReference>
<dbReference type="RNAct" id="Q9D786">
    <property type="molecule type" value="protein"/>
</dbReference>
<dbReference type="Bgee" id="ENSMUSG00000078762">
    <property type="expression patterns" value="Expressed in bone marrow and 69 other cell types or tissues"/>
</dbReference>
<dbReference type="GO" id="GO:0005813">
    <property type="term" value="C:centrosome"/>
    <property type="evidence" value="ECO:0007669"/>
    <property type="project" value="UniProtKB-SubCell"/>
</dbReference>
<dbReference type="GO" id="GO:0005737">
    <property type="term" value="C:cytoplasm"/>
    <property type="evidence" value="ECO:0007669"/>
    <property type="project" value="UniProtKB-KW"/>
</dbReference>
<dbReference type="GO" id="GO:0070652">
    <property type="term" value="C:HAUS complex"/>
    <property type="evidence" value="ECO:0000250"/>
    <property type="project" value="UniProtKB"/>
</dbReference>
<dbReference type="GO" id="GO:1990498">
    <property type="term" value="C:mitotic spindle microtubule"/>
    <property type="evidence" value="ECO:0000250"/>
    <property type="project" value="UniProtKB"/>
</dbReference>
<dbReference type="GO" id="GO:0051301">
    <property type="term" value="P:cell division"/>
    <property type="evidence" value="ECO:0007669"/>
    <property type="project" value="UniProtKB-KW"/>
</dbReference>
<dbReference type="GO" id="GO:0007098">
    <property type="term" value="P:centrosome cycle"/>
    <property type="evidence" value="ECO:0000250"/>
    <property type="project" value="UniProtKB"/>
</dbReference>
<dbReference type="GO" id="GO:0051225">
    <property type="term" value="P:spindle assembly"/>
    <property type="evidence" value="ECO:0000250"/>
    <property type="project" value="UniProtKB"/>
</dbReference>
<dbReference type="InterPro" id="IPR029131">
    <property type="entry name" value="HAUS5"/>
</dbReference>
<dbReference type="InterPro" id="IPR026215">
    <property type="entry name" value="HAUS5_metazoa"/>
</dbReference>
<dbReference type="PANTHER" id="PTHR28588">
    <property type="entry name" value="HAUS AUGMIN-LIKE COMPLEX SUBUNIT 5"/>
    <property type="match status" value="1"/>
</dbReference>
<dbReference type="PANTHER" id="PTHR28588:SF1">
    <property type="entry name" value="HAUS AUGMIN-LIKE COMPLEX SUBUNIT 5"/>
    <property type="match status" value="1"/>
</dbReference>
<dbReference type="Pfam" id="PF14817">
    <property type="entry name" value="HAUS5"/>
    <property type="match status" value="1"/>
</dbReference>
<dbReference type="PRINTS" id="PR02091">
    <property type="entry name" value="HAUSAUGMINL5"/>
</dbReference>
<organism>
    <name type="scientific">Mus musculus</name>
    <name type="common">Mouse</name>
    <dbReference type="NCBI Taxonomy" id="10090"/>
    <lineage>
        <taxon>Eukaryota</taxon>
        <taxon>Metazoa</taxon>
        <taxon>Chordata</taxon>
        <taxon>Craniata</taxon>
        <taxon>Vertebrata</taxon>
        <taxon>Euteleostomi</taxon>
        <taxon>Mammalia</taxon>
        <taxon>Eutheria</taxon>
        <taxon>Euarchontoglires</taxon>
        <taxon>Glires</taxon>
        <taxon>Rodentia</taxon>
        <taxon>Myomorpha</taxon>
        <taxon>Muroidea</taxon>
        <taxon>Muridae</taxon>
        <taxon>Murinae</taxon>
        <taxon>Mus</taxon>
        <taxon>Mus</taxon>
    </lineage>
</organism>
<reference key="1">
    <citation type="journal article" date="2005" name="Science">
        <title>The transcriptional landscape of the mammalian genome.</title>
        <authorList>
            <person name="Carninci P."/>
            <person name="Kasukawa T."/>
            <person name="Katayama S."/>
            <person name="Gough J."/>
            <person name="Frith M.C."/>
            <person name="Maeda N."/>
            <person name="Oyama R."/>
            <person name="Ravasi T."/>
            <person name="Lenhard B."/>
            <person name="Wells C."/>
            <person name="Kodzius R."/>
            <person name="Shimokawa K."/>
            <person name="Bajic V.B."/>
            <person name="Brenner S.E."/>
            <person name="Batalov S."/>
            <person name="Forrest A.R."/>
            <person name="Zavolan M."/>
            <person name="Davis M.J."/>
            <person name="Wilming L.G."/>
            <person name="Aidinis V."/>
            <person name="Allen J.E."/>
            <person name="Ambesi-Impiombato A."/>
            <person name="Apweiler R."/>
            <person name="Aturaliya R.N."/>
            <person name="Bailey T.L."/>
            <person name="Bansal M."/>
            <person name="Baxter L."/>
            <person name="Beisel K.W."/>
            <person name="Bersano T."/>
            <person name="Bono H."/>
            <person name="Chalk A.M."/>
            <person name="Chiu K.P."/>
            <person name="Choudhary V."/>
            <person name="Christoffels A."/>
            <person name="Clutterbuck D.R."/>
            <person name="Crowe M.L."/>
            <person name="Dalla E."/>
            <person name="Dalrymple B.P."/>
            <person name="de Bono B."/>
            <person name="Della Gatta G."/>
            <person name="di Bernardo D."/>
            <person name="Down T."/>
            <person name="Engstrom P."/>
            <person name="Fagiolini M."/>
            <person name="Faulkner G."/>
            <person name="Fletcher C.F."/>
            <person name="Fukushima T."/>
            <person name="Furuno M."/>
            <person name="Futaki S."/>
            <person name="Gariboldi M."/>
            <person name="Georgii-Hemming P."/>
            <person name="Gingeras T.R."/>
            <person name="Gojobori T."/>
            <person name="Green R.E."/>
            <person name="Gustincich S."/>
            <person name="Harbers M."/>
            <person name="Hayashi Y."/>
            <person name="Hensch T.K."/>
            <person name="Hirokawa N."/>
            <person name="Hill D."/>
            <person name="Huminiecki L."/>
            <person name="Iacono M."/>
            <person name="Ikeo K."/>
            <person name="Iwama A."/>
            <person name="Ishikawa T."/>
            <person name="Jakt M."/>
            <person name="Kanapin A."/>
            <person name="Katoh M."/>
            <person name="Kawasawa Y."/>
            <person name="Kelso J."/>
            <person name="Kitamura H."/>
            <person name="Kitano H."/>
            <person name="Kollias G."/>
            <person name="Krishnan S.P."/>
            <person name="Kruger A."/>
            <person name="Kummerfeld S.K."/>
            <person name="Kurochkin I.V."/>
            <person name="Lareau L.F."/>
            <person name="Lazarevic D."/>
            <person name="Lipovich L."/>
            <person name="Liu J."/>
            <person name="Liuni S."/>
            <person name="McWilliam S."/>
            <person name="Madan Babu M."/>
            <person name="Madera M."/>
            <person name="Marchionni L."/>
            <person name="Matsuda H."/>
            <person name="Matsuzawa S."/>
            <person name="Miki H."/>
            <person name="Mignone F."/>
            <person name="Miyake S."/>
            <person name="Morris K."/>
            <person name="Mottagui-Tabar S."/>
            <person name="Mulder N."/>
            <person name="Nakano N."/>
            <person name="Nakauchi H."/>
            <person name="Ng P."/>
            <person name="Nilsson R."/>
            <person name="Nishiguchi S."/>
            <person name="Nishikawa S."/>
            <person name="Nori F."/>
            <person name="Ohara O."/>
            <person name="Okazaki Y."/>
            <person name="Orlando V."/>
            <person name="Pang K.C."/>
            <person name="Pavan W.J."/>
            <person name="Pavesi G."/>
            <person name="Pesole G."/>
            <person name="Petrovsky N."/>
            <person name="Piazza S."/>
            <person name="Reed J."/>
            <person name="Reid J.F."/>
            <person name="Ring B.Z."/>
            <person name="Ringwald M."/>
            <person name="Rost B."/>
            <person name="Ruan Y."/>
            <person name="Salzberg S.L."/>
            <person name="Sandelin A."/>
            <person name="Schneider C."/>
            <person name="Schoenbach C."/>
            <person name="Sekiguchi K."/>
            <person name="Semple C.A."/>
            <person name="Seno S."/>
            <person name="Sessa L."/>
            <person name="Sheng Y."/>
            <person name="Shibata Y."/>
            <person name="Shimada H."/>
            <person name="Shimada K."/>
            <person name="Silva D."/>
            <person name="Sinclair B."/>
            <person name="Sperling S."/>
            <person name="Stupka E."/>
            <person name="Sugiura K."/>
            <person name="Sultana R."/>
            <person name="Takenaka Y."/>
            <person name="Taki K."/>
            <person name="Tammoja K."/>
            <person name="Tan S.L."/>
            <person name="Tang S."/>
            <person name="Taylor M.S."/>
            <person name="Tegner J."/>
            <person name="Teichmann S.A."/>
            <person name="Ueda H.R."/>
            <person name="van Nimwegen E."/>
            <person name="Verardo R."/>
            <person name="Wei C.L."/>
            <person name="Yagi K."/>
            <person name="Yamanishi H."/>
            <person name="Zabarovsky E."/>
            <person name="Zhu S."/>
            <person name="Zimmer A."/>
            <person name="Hide W."/>
            <person name="Bult C."/>
            <person name="Grimmond S.M."/>
            <person name="Teasdale R.D."/>
            <person name="Liu E.T."/>
            <person name="Brusic V."/>
            <person name="Quackenbush J."/>
            <person name="Wahlestedt C."/>
            <person name="Mattick J.S."/>
            <person name="Hume D.A."/>
            <person name="Kai C."/>
            <person name="Sasaki D."/>
            <person name="Tomaru Y."/>
            <person name="Fukuda S."/>
            <person name="Kanamori-Katayama M."/>
            <person name="Suzuki M."/>
            <person name="Aoki J."/>
            <person name="Arakawa T."/>
            <person name="Iida J."/>
            <person name="Imamura K."/>
            <person name="Itoh M."/>
            <person name="Kato T."/>
            <person name="Kawaji H."/>
            <person name="Kawagashira N."/>
            <person name="Kawashima T."/>
            <person name="Kojima M."/>
            <person name="Kondo S."/>
            <person name="Konno H."/>
            <person name="Nakano K."/>
            <person name="Ninomiya N."/>
            <person name="Nishio T."/>
            <person name="Okada M."/>
            <person name="Plessy C."/>
            <person name="Shibata K."/>
            <person name="Shiraki T."/>
            <person name="Suzuki S."/>
            <person name="Tagami M."/>
            <person name="Waki K."/>
            <person name="Watahiki A."/>
            <person name="Okamura-Oho Y."/>
            <person name="Suzuki H."/>
            <person name="Kawai J."/>
            <person name="Hayashizaki Y."/>
        </authorList>
    </citation>
    <scope>NUCLEOTIDE SEQUENCE [LARGE SCALE MRNA] (ISOFORM 1)</scope>
    <source>
        <strain>C57BL/6J</strain>
        <tissue>Tongue</tissue>
    </source>
</reference>
<reference key="2">
    <citation type="submission" date="2005-09" db="EMBL/GenBank/DDBJ databases">
        <authorList>
            <person name="Mural R.J."/>
            <person name="Adams M.D."/>
            <person name="Myers E.W."/>
            <person name="Smith H.O."/>
            <person name="Venter J.C."/>
        </authorList>
    </citation>
    <scope>NUCLEOTIDE SEQUENCE [LARGE SCALE GENOMIC DNA]</scope>
</reference>
<reference key="3">
    <citation type="journal article" date="2004" name="Genome Res.">
        <title>The status, quality, and expansion of the NIH full-length cDNA project: the Mammalian Gene Collection (MGC).</title>
        <authorList>
            <consortium name="The MGC Project Team"/>
        </authorList>
    </citation>
    <scope>NUCLEOTIDE SEQUENCE [LARGE SCALE MRNA] (ISOFORMS 1 AND 2)</scope>
    <source>
        <strain>C57BL/6J</strain>
        <strain>FVB/N</strain>
        <tissue>Brain</tissue>
        <tissue>Mammary tumor</tissue>
    </source>
</reference>
<reference key="4">
    <citation type="journal article" date="2003" name="DNA Res.">
        <title>Prediction of the coding sequences of mouse homologues of KIAA gene: III. The complete nucleotide sequences of 500 mouse KIAA-homologous cDNAs identified by screening of terminal sequences of cDNA clones randomly sampled from size-fractionated libraries.</title>
        <authorList>
            <person name="Okazaki N."/>
            <person name="Kikuno R."/>
            <person name="Ohara R."/>
            <person name="Inamoto S."/>
            <person name="Koseki H."/>
            <person name="Hiraoka S."/>
            <person name="Saga Y."/>
            <person name="Nagase T."/>
            <person name="Ohara O."/>
            <person name="Koga H."/>
        </authorList>
    </citation>
    <scope>NUCLEOTIDE SEQUENCE [LARGE SCALE MRNA] OF 71-619</scope>
    <source>
        <tissue>Embryonic tail</tissue>
    </source>
</reference>
<reference key="5">
    <citation type="submission" date="2003-12" db="EMBL/GenBank/DDBJ databases">
        <authorList>
            <person name="Okazaki N."/>
            <person name="Kikuno R."/>
            <person name="Nagase T."/>
            <person name="Ohara O."/>
            <person name="Koga H."/>
        </authorList>
    </citation>
    <scope>SEQUENCE REVISION</scope>
</reference>
<reference key="6">
    <citation type="journal article" date="2010" name="Cell">
        <title>A tissue-specific atlas of mouse protein phosphorylation and expression.</title>
        <authorList>
            <person name="Huttlin E.L."/>
            <person name="Jedrychowski M.P."/>
            <person name="Elias J.E."/>
            <person name="Goswami T."/>
            <person name="Rad R."/>
            <person name="Beausoleil S.A."/>
            <person name="Villen J."/>
            <person name="Haas W."/>
            <person name="Sowa M.E."/>
            <person name="Gygi S.P."/>
        </authorList>
    </citation>
    <scope>IDENTIFICATION BY MASS SPECTROMETRY [LARGE SCALE ANALYSIS]</scope>
    <source>
        <tissue>Spleen</tissue>
    </source>
</reference>
<evidence type="ECO:0000250" key="1"/>
<evidence type="ECO:0000250" key="2">
    <source>
        <dbReference type="UniProtKB" id="O94927"/>
    </source>
</evidence>
<evidence type="ECO:0000255" key="3"/>
<evidence type="ECO:0000303" key="4">
    <source>
    </source>
</evidence>
<evidence type="ECO:0000305" key="5"/>
<protein>
    <recommendedName>
        <fullName>HAUS augmin-like complex subunit 5</fullName>
    </recommendedName>
</protein>
<comment type="function">
    <text evidence="1">Contributes to mitotic spindle assembly, maintenance of centrosome integrity and completion of cytokinesis as part of the HAUS augmin-like complex.</text>
</comment>
<comment type="subunit">
    <text evidence="2">Component of the HAUS augmin-like complex. The complex interacts with the gamma-tubulin ring complex and this interaction is required for spindle assembly (By similarity). Interacts with EML3 (phosphorylated at 'Thr-882') (By similarity).</text>
</comment>
<comment type="subcellular location">
    <subcellularLocation>
        <location evidence="2">Cytoplasm</location>
        <location evidence="2">Cytoskeleton</location>
        <location evidence="2">Microtubule organizing center</location>
        <location evidence="2">Centrosome</location>
    </subcellularLocation>
    <subcellularLocation>
        <location evidence="2">Cytoplasm</location>
        <location evidence="2">Cytoskeleton</location>
        <location evidence="2">Spindle</location>
    </subcellularLocation>
    <text evidence="2">Localizes to interphase centrosomes and to mitotic spindle microtubules.</text>
</comment>
<comment type="alternative products">
    <event type="alternative splicing"/>
    <isoform>
        <id>Q9D786-1</id>
        <name>1</name>
        <sequence type="displayed"/>
    </isoform>
    <isoform>
        <id>Q9D786-2</id>
        <name>2</name>
        <sequence type="described" ref="VSP_013929 VSP_013930"/>
    </isoform>
</comment>
<comment type="similarity">
    <text evidence="5">Belongs to the HAUS5 family.</text>
</comment>
<comment type="sequence caution" evidence="5">
    <conflict type="erroneous initiation">
        <sequence resource="EMBL-CDS" id="AAH23723"/>
    </conflict>
    <text>Extended N-terminus.</text>
</comment>
<comment type="sequence caution" evidence="5">
    <conflict type="erroneous initiation">
        <sequence resource="EMBL-CDS" id="AAH89002"/>
    </conflict>
    <text>Extended N-terminus.</text>
</comment>